<evidence type="ECO:0000255" key="1">
    <source>
        <dbReference type="HAMAP-Rule" id="MF_00006"/>
    </source>
</evidence>
<accession>B8CNI1</accession>
<comment type="catalytic activity">
    <reaction evidence="1">
        <text>2-(N(omega)-L-arginino)succinate = fumarate + L-arginine</text>
        <dbReference type="Rhea" id="RHEA:24020"/>
        <dbReference type="ChEBI" id="CHEBI:29806"/>
        <dbReference type="ChEBI" id="CHEBI:32682"/>
        <dbReference type="ChEBI" id="CHEBI:57472"/>
        <dbReference type="EC" id="4.3.2.1"/>
    </reaction>
</comment>
<comment type="pathway">
    <text evidence="1">Amino-acid biosynthesis; L-arginine biosynthesis; L-arginine from L-ornithine and carbamoyl phosphate: step 3/3.</text>
</comment>
<comment type="subcellular location">
    <subcellularLocation>
        <location evidence="1">Cytoplasm</location>
    </subcellularLocation>
</comment>
<comment type="similarity">
    <text evidence="1">Belongs to the lyase 1 family. Argininosuccinate lyase subfamily.</text>
</comment>
<proteinExistence type="inferred from homology"/>
<sequence length="461" mass="50275">MALWGGRFSQESSALFKLFNDSLPVDYRLIEQDIIGSIAWASAITQVGVLTTDECTQLHAALNELLAETSTNPELIIASGAEDIHSFVEQSLIAKVGDLGKKLHTGRSRNDQVATDLKLWCKKEGQELLELLGKLRTALIELAEREIDAVMPGYTHLQRAQPVLFGHWCLAYVEMFERDISRLQDALKRADTCPLGTGALAGTAYPMDRVKLAQSLGFASPTLNSLDTVSDRDHVVEICSDASISMMHLSRMAEDLIFFNSGEAGFIELDDEVTSGSSLMPQKKNPDALELIRGKTGRVYGSLIGILTTMKALPLAYNKDMQEDKEGLFDVMDSWAICLEMAALVLSGLQVNRERTLSAAQQGYANSTELADYLVAKGMPFREAHHVVGEAVVNAIAKQTPLEDLPLEELQSFSAIIEADVYECLTIESCLAKREALGGTSLPQVKSALAGKQVIPIALSI</sequence>
<feature type="chain" id="PRO_1000116211" description="Argininosuccinate lyase">
    <location>
        <begin position="1"/>
        <end position="461"/>
    </location>
</feature>
<keyword id="KW-0028">Amino-acid biosynthesis</keyword>
<keyword id="KW-0055">Arginine biosynthesis</keyword>
<keyword id="KW-0963">Cytoplasm</keyword>
<keyword id="KW-0456">Lyase</keyword>
<dbReference type="EC" id="4.3.2.1" evidence="1"/>
<dbReference type="EMBL" id="CP000472">
    <property type="protein sequence ID" value="ACJ28815.1"/>
    <property type="molecule type" value="Genomic_DNA"/>
</dbReference>
<dbReference type="RefSeq" id="WP_020912177.1">
    <property type="nucleotide sequence ID" value="NC_011566.1"/>
</dbReference>
<dbReference type="SMR" id="B8CNI1"/>
<dbReference type="STRING" id="225849.swp_2059"/>
<dbReference type="KEGG" id="swp:swp_2059"/>
<dbReference type="eggNOG" id="COG0165">
    <property type="taxonomic scope" value="Bacteria"/>
</dbReference>
<dbReference type="HOGENOM" id="CLU_027272_2_3_6"/>
<dbReference type="OrthoDB" id="9769623at2"/>
<dbReference type="UniPathway" id="UPA00068">
    <property type="reaction ID" value="UER00114"/>
</dbReference>
<dbReference type="Proteomes" id="UP000000753">
    <property type="component" value="Chromosome"/>
</dbReference>
<dbReference type="GO" id="GO:0005829">
    <property type="term" value="C:cytosol"/>
    <property type="evidence" value="ECO:0007669"/>
    <property type="project" value="TreeGrafter"/>
</dbReference>
<dbReference type="GO" id="GO:0004056">
    <property type="term" value="F:argininosuccinate lyase activity"/>
    <property type="evidence" value="ECO:0007669"/>
    <property type="project" value="UniProtKB-UniRule"/>
</dbReference>
<dbReference type="GO" id="GO:0042450">
    <property type="term" value="P:arginine biosynthetic process via ornithine"/>
    <property type="evidence" value="ECO:0007669"/>
    <property type="project" value="InterPro"/>
</dbReference>
<dbReference type="GO" id="GO:0006526">
    <property type="term" value="P:L-arginine biosynthetic process"/>
    <property type="evidence" value="ECO:0007669"/>
    <property type="project" value="UniProtKB-UniRule"/>
</dbReference>
<dbReference type="CDD" id="cd01359">
    <property type="entry name" value="Argininosuccinate_lyase"/>
    <property type="match status" value="1"/>
</dbReference>
<dbReference type="FunFam" id="1.10.40.30:FF:000001">
    <property type="entry name" value="Argininosuccinate lyase"/>
    <property type="match status" value="1"/>
</dbReference>
<dbReference type="FunFam" id="1.20.200.10:FF:000006">
    <property type="entry name" value="Argininosuccinate lyase"/>
    <property type="match status" value="1"/>
</dbReference>
<dbReference type="Gene3D" id="1.10.40.30">
    <property type="entry name" value="Fumarase/aspartase (C-terminal domain)"/>
    <property type="match status" value="1"/>
</dbReference>
<dbReference type="Gene3D" id="1.20.200.10">
    <property type="entry name" value="Fumarase/aspartase (Central domain)"/>
    <property type="match status" value="1"/>
</dbReference>
<dbReference type="Gene3D" id="1.10.275.10">
    <property type="entry name" value="Fumarase/aspartase (N-terminal domain)"/>
    <property type="match status" value="1"/>
</dbReference>
<dbReference type="HAMAP" id="MF_00006">
    <property type="entry name" value="Arg_succ_lyase"/>
    <property type="match status" value="1"/>
</dbReference>
<dbReference type="InterPro" id="IPR029419">
    <property type="entry name" value="Arg_succ_lyase_C"/>
</dbReference>
<dbReference type="InterPro" id="IPR009049">
    <property type="entry name" value="Argininosuccinate_lyase"/>
</dbReference>
<dbReference type="InterPro" id="IPR024083">
    <property type="entry name" value="Fumarase/histidase_N"/>
</dbReference>
<dbReference type="InterPro" id="IPR020557">
    <property type="entry name" value="Fumarate_lyase_CS"/>
</dbReference>
<dbReference type="InterPro" id="IPR000362">
    <property type="entry name" value="Fumarate_lyase_fam"/>
</dbReference>
<dbReference type="InterPro" id="IPR022761">
    <property type="entry name" value="Fumarate_lyase_N"/>
</dbReference>
<dbReference type="InterPro" id="IPR008948">
    <property type="entry name" value="L-Aspartase-like"/>
</dbReference>
<dbReference type="NCBIfam" id="TIGR00838">
    <property type="entry name" value="argH"/>
    <property type="match status" value="1"/>
</dbReference>
<dbReference type="NCBIfam" id="NF008964">
    <property type="entry name" value="PRK12308.1"/>
    <property type="match status" value="1"/>
</dbReference>
<dbReference type="PANTHER" id="PTHR43814">
    <property type="entry name" value="ARGININOSUCCINATE LYASE"/>
    <property type="match status" value="1"/>
</dbReference>
<dbReference type="PANTHER" id="PTHR43814:SF1">
    <property type="entry name" value="ARGININOSUCCINATE LYASE"/>
    <property type="match status" value="1"/>
</dbReference>
<dbReference type="Pfam" id="PF14698">
    <property type="entry name" value="ASL_C2"/>
    <property type="match status" value="1"/>
</dbReference>
<dbReference type="Pfam" id="PF00206">
    <property type="entry name" value="Lyase_1"/>
    <property type="match status" value="1"/>
</dbReference>
<dbReference type="PRINTS" id="PR00145">
    <property type="entry name" value="ARGSUCLYASE"/>
</dbReference>
<dbReference type="PRINTS" id="PR00149">
    <property type="entry name" value="FUMRATELYASE"/>
</dbReference>
<dbReference type="SUPFAM" id="SSF48557">
    <property type="entry name" value="L-aspartase-like"/>
    <property type="match status" value="1"/>
</dbReference>
<dbReference type="PROSITE" id="PS00163">
    <property type="entry name" value="FUMARATE_LYASES"/>
    <property type="match status" value="1"/>
</dbReference>
<name>ARLY_SHEPW</name>
<gene>
    <name evidence="1" type="primary">argH</name>
    <name type="ordered locus">swp_2059</name>
</gene>
<protein>
    <recommendedName>
        <fullName evidence="1">Argininosuccinate lyase</fullName>
        <shortName evidence="1">ASAL</shortName>
        <ecNumber evidence="1">4.3.2.1</ecNumber>
    </recommendedName>
    <alternativeName>
        <fullName evidence="1">Arginosuccinase</fullName>
    </alternativeName>
</protein>
<reference key="1">
    <citation type="journal article" date="2008" name="PLoS ONE">
        <title>Environmental adaptation: genomic analysis of the piezotolerant and psychrotolerant deep-sea iron reducing bacterium Shewanella piezotolerans WP3.</title>
        <authorList>
            <person name="Wang F."/>
            <person name="Wang J."/>
            <person name="Jian H."/>
            <person name="Zhang B."/>
            <person name="Li S."/>
            <person name="Wang F."/>
            <person name="Zeng X."/>
            <person name="Gao L."/>
            <person name="Bartlett D.H."/>
            <person name="Yu J."/>
            <person name="Hu S."/>
            <person name="Xiao X."/>
        </authorList>
    </citation>
    <scope>NUCLEOTIDE SEQUENCE [LARGE SCALE GENOMIC DNA]</scope>
    <source>
        <strain>WP3 / JCM 13877</strain>
    </source>
</reference>
<organism>
    <name type="scientific">Shewanella piezotolerans (strain WP3 / JCM 13877)</name>
    <dbReference type="NCBI Taxonomy" id="225849"/>
    <lineage>
        <taxon>Bacteria</taxon>
        <taxon>Pseudomonadati</taxon>
        <taxon>Pseudomonadota</taxon>
        <taxon>Gammaproteobacteria</taxon>
        <taxon>Alteromonadales</taxon>
        <taxon>Shewanellaceae</taxon>
        <taxon>Shewanella</taxon>
    </lineage>
</organism>